<dbReference type="PIR" id="S15871">
    <property type="entry name" value="S15871"/>
</dbReference>
<dbReference type="SMR" id="P29179"/>
<dbReference type="Proteomes" id="UP000694559">
    <property type="component" value="Unplaced"/>
</dbReference>
<dbReference type="GO" id="GO:0005576">
    <property type="term" value="C:extracellular region"/>
    <property type="evidence" value="ECO:0007669"/>
    <property type="project" value="UniProtKB-SubCell"/>
</dbReference>
<dbReference type="GO" id="GO:0090729">
    <property type="term" value="F:toxin activity"/>
    <property type="evidence" value="ECO:0007669"/>
    <property type="project" value="UniProtKB-KW"/>
</dbReference>
<dbReference type="CDD" id="cd00206">
    <property type="entry name" value="TFP_snake_toxin"/>
    <property type="match status" value="1"/>
</dbReference>
<dbReference type="Gene3D" id="2.10.60.10">
    <property type="entry name" value="CD59"/>
    <property type="match status" value="1"/>
</dbReference>
<dbReference type="InterPro" id="IPR003571">
    <property type="entry name" value="Snake_3FTx"/>
</dbReference>
<dbReference type="InterPro" id="IPR045860">
    <property type="entry name" value="Snake_toxin-like_sf"/>
</dbReference>
<dbReference type="InterPro" id="IPR018354">
    <property type="entry name" value="Snake_toxin_con_site"/>
</dbReference>
<dbReference type="InterPro" id="IPR054131">
    <property type="entry name" value="Toxin_cobra-type"/>
</dbReference>
<dbReference type="Pfam" id="PF21947">
    <property type="entry name" value="Toxin_cobra-type"/>
    <property type="match status" value="1"/>
</dbReference>
<dbReference type="SUPFAM" id="SSF57302">
    <property type="entry name" value="Snake toxin-like"/>
    <property type="match status" value="1"/>
</dbReference>
<dbReference type="PROSITE" id="PS00272">
    <property type="entry name" value="SNAKE_TOXIN"/>
    <property type="match status" value="1"/>
</dbReference>
<keyword id="KW-0903">Direct protein sequencing</keyword>
<keyword id="KW-1015">Disulfide bond</keyword>
<keyword id="KW-1185">Reference proteome</keyword>
<keyword id="KW-0964">Secreted</keyword>
<keyword id="KW-0800">Toxin</keyword>
<name>3NO25_NAJNA</name>
<protein>
    <recommendedName>
        <fullName evidence="5">Weak neurotoxin 5</fullName>
    </recommendedName>
</protein>
<organism>
    <name type="scientific">Naja naja</name>
    <name type="common">Indian cobra</name>
    <dbReference type="NCBI Taxonomy" id="35670"/>
    <lineage>
        <taxon>Eukaryota</taxon>
        <taxon>Metazoa</taxon>
        <taxon>Chordata</taxon>
        <taxon>Craniata</taxon>
        <taxon>Vertebrata</taxon>
        <taxon>Euteleostomi</taxon>
        <taxon>Lepidosauria</taxon>
        <taxon>Squamata</taxon>
        <taxon>Bifurcata</taxon>
        <taxon>Unidentata</taxon>
        <taxon>Episquamata</taxon>
        <taxon>Toxicofera</taxon>
        <taxon>Serpentes</taxon>
        <taxon>Colubroidea</taxon>
        <taxon>Elapidae</taxon>
        <taxon>Elapinae</taxon>
        <taxon>Naja</taxon>
    </lineage>
</organism>
<sequence length="62" mass="6943">LTCLICPEKYCNKVHTCLNGENICFKRFNRILGKRYDLGCAATCPTVKTGIVQCCSTDKCNH</sequence>
<proteinExistence type="evidence at protein level"/>
<accession>P29179</accession>
<reference key="1">
    <citation type="journal article" date="1991" name="FEBS Lett.">
        <title>Extensive multiplicity of the miscellaneous type of neurotoxins from the venom of the cobra Naja naja naja and structural characterization of major components.</title>
        <authorList>
            <person name="Shafqat J."/>
            <person name="Siddiqi A.R."/>
            <person name="Zaidi Z.H."/>
            <person name="Joernvall H."/>
        </authorList>
    </citation>
    <scope>PROTEIN SEQUENCE</scope>
    <scope>SUBCELLULAR LOCATION</scope>
    <source>
        <tissue>Venom</tissue>
    </source>
</reference>
<evidence type="ECO:0000250" key="1">
    <source>
        <dbReference type="UniProtKB" id="O42255"/>
    </source>
</evidence>
<evidence type="ECO:0000250" key="2">
    <source>
        <dbReference type="UniProtKB" id="Q8AY51"/>
    </source>
</evidence>
<evidence type="ECO:0000269" key="3">
    <source>
    </source>
</evidence>
<evidence type="ECO:0000305" key="4"/>
<evidence type="ECO:0000305" key="5">
    <source>
    </source>
</evidence>
<feature type="chain" id="PRO_0000093637" description="Weak neurotoxin 5" evidence="3">
    <location>
        <begin position="1"/>
        <end position="62"/>
    </location>
</feature>
<feature type="disulfide bond" evidence="2">
    <location>
        <begin position="3"/>
        <end position="24"/>
    </location>
</feature>
<feature type="disulfide bond" evidence="2">
    <location>
        <begin position="6"/>
        <end position="11"/>
    </location>
</feature>
<feature type="disulfide bond" evidence="2">
    <location>
        <begin position="17"/>
        <end position="40"/>
    </location>
</feature>
<feature type="disulfide bond" evidence="2">
    <location>
        <begin position="44"/>
        <end position="54"/>
    </location>
</feature>
<feature type="disulfide bond" evidence="2">
    <location>
        <begin position="55"/>
        <end position="60"/>
    </location>
</feature>
<comment type="function">
    <text evidence="1">Binds with low affinity to muscular (alpha-1-beta-1-delta-epsilon/CHRNA1-CHRNB1-CHRND-CHRNE) and very low affinity to neuronal (alpha-7/CHRNA7) nicotinic acetylcholine receptor (nAChR).</text>
</comment>
<comment type="subcellular location">
    <subcellularLocation>
        <location evidence="3">Secreted</location>
    </subcellularLocation>
</comment>
<comment type="tissue specificity">
    <text evidence="5">Expressed by the venom gland.</text>
</comment>
<comment type="similarity">
    <text evidence="4">Belongs to the three-finger toxin family. Ancestral subfamily. Orphan group II sub-subfamily.</text>
</comment>